<proteinExistence type="inferred from homology"/>
<reference key="1">
    <citation type="journal article" date="2012" name="Stand. Genomic Sci.">
        <title>Complete genome sequence of Polynucleobacter necessarius subsp. asymbioticus type strain (QLW-P1DMWA-1(T)).</title>
        <authorList>
            <person name="Meincke L."/>
            <person name="Copeland A."/>
            <person name="Lapidus A."/>
            <person name="Lucas S."/>
            <person name="Berry K.W."/>
            <person name="Del Rio T.G."/>
            <person name="Hammon N."/>
            <person name="Dalin E."/>
            <person name="Tice H."/>
            <person name="Pitluck S."/>
            <person name="Richardson P."/>
            <person name="Bruce D."/>
            <person name="Goodwin L."/>
            <person name="Han C."/>
            <person name="Tapia R."/>
            <person name="Detter J.C."/>
            <person name="Schmutz J."/>
            <person name="Brettin T."/>
            <person name="Larimer F."/>
            <person name="Land M."/>
            <person name="Hauser L."/>
            <person name="Kyrpides N.C."/>
            <person name="Ivanova N."/>
            <person name="Goker M."/>
            <person name="Woyke T."/>
            <person name="Wu Q.L."/>
            <person name="Pockl M."/>
            <person name="Hahn M.W."/>
            <person name="Klenk H.P."/>
        </authorList>
    </citation>
    <scope>NUCLEOTIDE SEQUENCE [LARGE SCALE GENOMIC DNA]</scope>
    <source>
        <strain>DSM 18221 / CIP 109841 / QLW-P1DMWA-1</strain>
    </source>
</reference>
<feature type="chain" id="PRO_1000080972" description="Nucleoside diphosphate kinase">
    <location>
        <begin position="1"/>
        <end position="141"/>
    </location>
</feature>
<feature type="active site" description="Pros-phosphohistidine intermediate" evidence="1">
    <location>
        <position position="117"/>
    </location>
</feature>
<feature type="binding site" evidence="1">
    <location>
        <position position="11"/>
    </location>
    <ligand>
        <name>ATP</name>
        <dbReference type="ChEBI" id="CHEBI:30616"/>
    </ligand>
</feature>
<feature type="binding site" evidence="1">
    <location>
        <position position="59"/>
    </location>
    <ligand>
        <name>ATP</name>
        <dbReference type="ChEBI" id="CHEBI:30616"/>
    </ligand>
</feature>
<feature type="binding site" evidence="1">
    <location>
        <position position="87"/>
    </location>
    <ligand>
        <name>ATP</name>
        <dbReference type="ChEBI" id="CHEBI:30616"/>
    </ligand>
</feature>
<feature type="binding site" evidence="1">
    <location>
        <position position="93"/>
    </location>
    <ligand>
        <name>ATP</name>
        <dbReference type="ChEBI" id="CHEBI:30616"/>
    </ligand>
</feature>
<feature type="binding site" evidence="1">
    <location>
        <position position="104"/>
    </location>
    <ligand>
        <name>ATP</name>
        <dbReference type="ChEBI" id="CHEBI:30616"/>
    </ligand>
</feature>
<feature type="binding site" evidence="1">
    <location>
        <position position="114"/>
    </location>
    <ligand>
        <name>ATP</name>
        <dbReference type="ChEBI" id="CHEBI:30616"/>
    </ligand>
</feature>
<dbReference type="EC" id="2.7.4.6" evidence="1"/>
<dbReference type="EMBL" id="CP000655">
    <property type="protein sequence ID" value="ABP34507.1"/>
    <property type="molecule type" value="Genomic_DNA"/>
</dbReference>
<dbReference type="RefSeq" id="WP_011903132.1">
    <property type="nucleotide sequence ID" value="NC_009379.1"/>
</dbReference>
<dbReference type="SMR" id="A4SYE3"/>
<dbReference type="GeneID" id="31481681"/>
<dbReference type="KEGG" id="pnu:Pnuc_1293"/>
<dbReference type="eggNOG" id="COG0105">
    <property type="taxonomic scope" value="Bacteria"/>
</dbReference>
<dbReference type="HOGENOM" id="CLU_060216_8_1_4"/>
<dbReference type="Proteomes" id="UP000000231">
    <property type="component" value="Chromosome"/>
</dbReference>
<dbReference type="GO" id="GO:0005737">
    <property type="term" value="C:cytoplasm"/>
    <property type="evidence" value="ECO:0007669"/>
    <property type="project" value="UniProtKB-SubCell"/>
</dbReference>
<dbReference type="GO" id="GO:0005524">
    <property type="term" value="F:ATP binding"/>
    <property type="evidence" value="ECO:0007669"/>
    <property type="project" value="UniProtKB-UniRule"/>
</dbReference>
<dbReference type="GO" id="GO:0046872">
    <property type="term" value="F:metal ion binding"/>
    <property type="evidence" value="ECO:0007669"/>
    <property type="project" value="UniProtKB-KW"/>
</dbReference>
<dbReference type="GO" id="GO:0004550">
    <property type="term" value="F:nucleoside diphosphate kinase activity"/>
    <property type="evidence" value="ECO:0007669"/>
    <property type="project" value="UniProtKB-UniRule"/>
</dbReference>
<dbReference type="GO" id="GO:0006241">
    <property type="term" value="P:CTP biosynthetic process"/>
    <property type="evidence" value="ECO:0007669"/>
    <property type="project" value="UniProtKB-UniRule"/>
</dbReference>
<dbReference type="GO" id="GO:0006183">
    <property type="term" value="P:GTP biosynthetic process"/>
    <property type="evidence" value="ECO:0007669"/>
    <property type="project" value="UniProtKB-UniRule"/>
</dbReference>
<dbReference type="GO" id="GO:0006228">
    <property type="term" value="P:UTP biosynthetic process"/>
    <property type="evidence" value="ECO:0007669"/>
    <property type="project" value="UniProtKB-UniRule"/>
</dbReference>
<dbReference type="CDD" id="cd04413">
    <property type="entry name" value="NDPk_I"/>
    <property type="match status" value="1"/>
</dbReference>
<dbReference type="FunFam" id="3.30.70.141:FF:000001">
    <property type="entry name" value="Nucleoside diphosphate kinase"/>
    <property type="match status" value="1"/>
</dbReference>
<dbReference type="Gene3D" id="3.30.70.141">
    <property type="entry name" value="Nucleoside diphosphate kinase-like domain"/>
    <property type="match status" value="1"/>
</dbReference>
<dbReference type="HAMAP" id="MF_00451">
    <property type="entry name" value="NDP_kinase"/>
    <property type="match status" value="1"/>
</dbReference>
<dbReference type="InterPro" id="IPR034907">
    <property type="entry name" value="NDK-like_dom"/>
</dbReference>
<dbReference type="InterPro" id="IPR036850">
    <property type="entry name" value="NDK-like_dom_sf"/>
</dbReference>
<dbReference type="InterPro" id="IPR001564">
    <property type="entry name" value="Nucleoside_diP_kinase"/>
</dbReference>
<dbReference type="InterPro" id="IPR023005">
    <property type="entry name" value="Nucleoside_diP_kinase_AS"/>
</dbReference>
<dbReference type="NCBIfam" id="NF001908">
    <property type="entry name" value="PRK00668.1"/>
    <property type="match status" value="1"/>
</dbReference>
<dbReference type="PANTHER" id="PTHR46161">
    <property type="entry name" value="NUCLEOSIDE DIPHOSPHATE KINASE"/>
    <property type="match status" value="1"/>
</dbReference>
<dbReference type="PANTHER" id="PTHR46161:SF3">
    <property type="entry name" value="NUCLEOSIDE DIPHOSPHATE KINASE DDB_G0292928-RELATED"/>
    <property type="match status" value="1"/>
</dbReference>
<dbReference type="Pfam" id="PF00334">
    <property type="entry name" value="NDK"/>
    <property type="match status" value="1"/>
</dbReference>
<dbReference type="PRINTS" id="PR01243">
    <property type="entry name" value="NUCDPKINASE"/>
</dbReference>
<dbReference type="SMART" id="SM00562">
    <property type="entry name" value="NDK"/>
    <property type="match status" value="1"/>
</dbReference>
<dbReference type="SUPFAM" id="SSF54919">
    <property type="entry name" value="Nucleoside diphosphate kinase, NDK"/>
    <property type="match status" value="1"/>
</dbReference>
<dbReference type="PROSITE" id="PS00469">
    <property type="entry name" value="NDPK"/>
    <property type="match status" value="1"/>
</dbReference>
<dbReference type="PROSITE" id="PS51374">
    <property type="entry name" value="NDPK_LIKE"/>
    <property type="match status" value="1"/>
</dbReference>
<gene>
    <name evidence="1" type="primary">ndk</name>
    <name type="ordered locus">Pnuc_1293</name>
</gene>
<name>NDK_POLAQ</name>
<organism>
    <name type="scientific">Polynucleobacter asymbioticus (strain DSM 18221 / CIP 109841 / QLW-P1DMWA-1)</name>
    <name type="common">Polynucleobacter necessarius subsp. asymbioticus</name>
    <dbReference type="NCBI Taxonomy" id="312153"/>
    <lineage>
        <taxon>Bacteria</taxon>
        <taxon>Pseudomonadati</taxon>
        <taxon>Pseudomonadota</taxon>
        <taxon>Betaproteobacteria</taxon>
        <taxon>Burkholderiales</taxon>
        <taxon>Burkholderiaceae</taxon>
        <taxon>Polynucleobacter</taxon>
    </lineage>
</organism>
<comment type="function">
    <text evidence="1">Major role in the synthesis of nucleoside triphosphates other than ATP. The ATP gamma phosphate is transferred to the NDP beta phosphate via a ping-pong mechanism, using a phosphorylated active-site intermediate.</text>
</comment>
<comment type="catalytic activity">
    <reaction evidence="1">
        <text>a 2'-deoxyribonucleoside 5'-diphosphate + ATP = a 2'-deoxyribonucleoside 5'-triphosphate + ADP</text>
        <dbReference type="Rhea" id="RHEA:44640"/>
        <dbReference type="ChEBI" id="CHEBI:30616"/>
        <dbReference type="ChEBI" id="CHEBI:61560"/>
        <dbReference type="ChEBI" id="CHEBI:73316"/>
        <dbReference type="ChEBI" id="CHEBI:456216"/>
        <dbReference type="EC" id="2.7.4.6"/>
    </reaction>
</comment>
<comment type="catalytic activity">
    <reaction evidence="1">
        <text>a ribonucleoside 5'-diphosphate + ATP = a ribonucleoside 5'-triphosphate + ADP</text>
        <dbReference type="Rhea" id="RHEA:18113"/>
        <dbReference type="ChEBI" id="CHEBI:30616"/>
        <dbReference type="ChEBI" id="CHEBI:57930"/>
        <dbReference type="ChEBI" id="CHEBI:61557"/>
        <dbReference type="ChEBI" id="CHEBI:456216"/>
        <dbReference type="EC" id="2.7.4.6"/>
    </reaction>
</comment>
<comment type="cofactor">
    <cofactor evidence="1">
        <name>Mg(2+)</name>
        <dbReference type="ChEBI" id="CHEBI:18420"/>
    </cofactor>
</comment>
<comment type="subunit">
    <text evidence="1">Homotetramer.</text>
</comment>
<comment type="subcellular location">
    <subcellularLocation>
        <location evidence="1">Cytoplasm</location>
    </subcellularLocation>
</comment>
<comment type="similarity">
    <text evidence="1">Belongs to the NDK family.</text>
</comment>
<protein>
    <recommendedName>
        <fullName evidence="1">Nucleoside diphosphate kinase</fullName>
        <shortName evidence="1">NDK</shortName>
        <shortName evidence="1">NDP kinase</shortName>
        <ecNumber evidence="1">2.7.4.6</ecNumber>
    </recommendedName>
    <alternativeName>
        <fullName evidence="1">Nucleoside-2-P kinase</fullName>
    </alternativeName>
</protein>
<accession>A4SYE3</accession>
<keyword id="KW-0067">ATP-binding</keyword>
<keyword id="KW-0963">Cytoplasm</keyword>
<keyword id="KW-0418">Kinase</keyword>
<keyword id="KW-0460">Magnesium</keyword>
<keyword id="KW-0479">Metal-binding</keyword>
<keyword id="KW-0546">Nucleotide metabolism</keyword>
<keyword id="KW-0547">Nucleotide-binding</keyword>
<keyword id="KW-0597">Phosphoprotein</keyword>
<keyword id="KW-1185">Reference proteome</keyword>
<keyword id="KW-0808">Transferase</keyword>
<sequence>MAIERTLSIIKPDAVAKNVIGKIYDRFESAGLKIIASRMAHLSQNEAEQFYGVHKDRPFFKDLVSFMISGPVMIQVLQGEGAIAKNRDLMGATDPKKADKGTIRADFADSIDANAVHGSDAPETAAVEVAFFFPGMNVFNR</sequence>
<evidence type="ECO:0000255" key="1">
    <source>
        <dbReference type="HAMAP-Rule" id="MF_00451"/>
    </source>
</evidence>